<accession>Q99KF0</accession>
<keyword id="KW-0053">Apoptosis</keyword>
<keyword id="KW-0175">Coiled coil</keyword>
<keyword id="KW-0963">Cytoplasm</keyword>
<keyword id="KW-0597">Phosphoprotein</keyword>
<keyword id="KW-1185">Reference proteome</keyword>
<dbReference type="EMBL" id="AF363457">
    <property type="protein sequence ID" value="AAK60137.1"/>
    <property type="molecule type" value="mRNA"/>
</dbReference>
<dbReference type="EMBL" id="BC004692">
    <property type="protein sequence ID" value="AAH04692.1"/>
    <property type="molecule type" value="mRNA"/>
</dbReference>
<dbReference type="EMBL" id="BC029102">
    <property type="protein sequence ID" value="AAH29102.1"/>
    <property type="molecule type" value="mRNA"/>
</dbReference>
<dbReference type="CCDS" id="CCDS25715.1"/>
<dbReference type="RefSeq" id="NP_570956.1">
    <property type="nucleotide sequence ID" value="NM_130886.4"/>
</dbReference>
<dbReference type="RefSeq" id="XP_006532439.1">
    <property type="nucleotide sequence ID" value="XM_006532376.1"/>
</dbReference>
<dbReference type="SMR" id="Q99KF0"/>
<dbReference type="BioGRID" id="228392">
    <property type="interactions" value="2"/>
</dbReference>
<dbReference type="FunCoup" id="Q99KF0">
    <property type="interactions" value="480"/>
</dbReference>
<dbReference type="STRING" id="10090.ENSMUSP00000101857"/>
<dbReference type="GlyGen" id="Q99KF0">
    <property type="glycosylation" value="1 site"/>
</dbReference>
<dbReference type="iPTMnet" id="Q99KF0"/>
<dbReference type="PhosphoSitePlus" id="Q99KF0"/>
<dbReference type="PaxDb" id="10090-ENSMUSP00000101857"/>
<dbReference type="ProteomicsDB" id="265333"/>
<dbReference type="Antibodypedia" id="19763">
    <property type="antibodies" value="206 antibodies from 32 providers"/>
</dbReference>
<dbReference type="Ensembl" id="ENSMUST00000053245.7">
    <property type="protein sequence ID" value="ENSMUSP00000053665.7"/>
    <property type="gene ID" value="ENSMUSG00000013483.15"/>
</dbReference>
<dbReference type="Ensembl" id="ENSMUST00000106250.8">
    <property type="protein sequence ID" value="ENSMUSP00000101857.2"/>
    <property type="gene ID" value="ENSMUSG00000013483.15"/>
</dbReference>
<dbReference type="GeneID" id="170720"/>
<dbReference type="KEGG" id="mmu:170720"/>
<dbReference type="UCSC" id="uc007mqk.1">
    <property type="organism name" value="mouse"/>
</dbReference>
<dbReference type="AGR" id="MGI:2386258"/>
<dbReference type="CTD" id="79092"/>
<dbReference type="MGI" id="MGI:2386258">
    <property type="gene designation" value="Card14"/>
</dbReference>
<dbReference type="VEuPathDB" id="HostDB:ENSMUSG00000013483"/>
<dbReference type="eggNOG" id="KOG0708">
    <property type="taxonomic scope" value="Eukaryota"/>
</dbReference>
<dbReference type="GeneTree" id="ENSGT00940000160777"/>
<dbReference type="HOGENOM" id="CLU_009760_0_0_1"/>
<dbReference type="InParanoid" id="Q99KF0"/>
<dbReference type="OMA" id="VVWTEQN"/>
<dbReference type="OrthoDB" id="8795751at2759"/>
<dbReference type="PhylomeDB" id="Q99KF0"/>
<dbReference type="TreeFam" id="TF315606"/>
<dbReference type="BioGRID-ORCS" id="170720">
    <property type="hits" value="7 hits in 78 CRISPR screens"/>
</dbReference>
<dbReference type="ChiTaRS" id="Card14">
    <property type="organism name" value="mouse"/>
</dbReference>
<dbReference type="PRO" id="PR:Q99KF0"/>
<dbReference type="Proteomes" id="UP000000589">
    <property type="component" value="Chromosome 11"/>
</dbReference>
<dbReference type="RNAct" id="Q99KF0">
    <property type="molecule type" value="protein"/>
</dbReference>
<dbReference type="Bgee" id="ENSMUSG00000013483">
    <property type="expression patterns" value="Expressed in epithelium of tongue and 55 other cell types or tissues"/>
</dbReference>
<dbReference type="GO" id="GO:0016235">
    <property type="term" value="C:aggresome"/>
    <property type="evidence" value="ECO:0007669"/>
    <property type="project" value="Ensembl"/>
</dbReference>
<dbReference type="GO" id="GO:0005737">
    <property type="term" value="C:cytoplasm"/>
    <property type="evidence" value="ECO:0000250"/>
    <property type="project" value="UniProtKB"/>
</dbReference>
<dbReference type="GO" id="GO:0005829">
    <property type="term" value="C:cytosol"/>
    <property type="evidence" value="ECO:0007669"/>
    <property type="project" value="Ensembl"/>
</dbReference>
<dbReference type="GO" id="GO:0050700">
    <property type="term" value="F:CARD domain binding"/>
    <property type="evidence" value="ECO:0007669"/>
    <property type="project" value="Ensembl"/>
</dbReference>
<dbReference type="GO" id="GO:0006915">
    <property type="term" value="P:apoptotic process"/>
    <property type="evidence" value="ECO:0007669"/>
    <property type="project" value="UniProtKB-KW"/>
</dbReference>
<dbReference type="GO" id="GO:0043066">
    <property type="term" value="P:negative regulation of apoptotic process"/>
    <property type="evidence" value="ECO:0000250"/>
    <property type="project" value="UniProtKB"/>
</dbReference>
<dbReference type="GO" id="GO:0051092">
    <property type="term" value="P:positive regulation of NF-kappaB transcription factor activity"/>
    <property type="evidence" value="ECO:0000250"/>
    <property type="project" value="UniProtKB"/>
</dbReference>
<dbReference type="GO" id="GO:0033209">
    <property type="term" value="P:tumor necrosis factor-mediated signaling pathway"/>
    <property type="evidence" value="ECO:0000250"/>
    <property type="project" value="UniProtKB"/>
</dbReference>
<dbReference type="CDD" id="cd06736">
    <property type="entry name" value="PDZ_CARD11_CARD14-like"/>
    <property type="match status" value="1"/>
</dbReference>
<dbReference type="FunFam" id="3.40.50.300:FF:001294">
    <property type="entry name" value="Caspase recruitment domain family member 14"/>
    <property type="match status" value="1"/>
</dbReference>
<dbReference type="FunFam" id="1.10.533.10:FF:000003">
    <property type="entry name" value="Caspase recruitment domain family, member 11"/>
    <property type="match status" value="1"/>
</dbReference>
<dbReference type="FunFam" id="2.30.30.40:FF:000223">
    <property type="entry name" value="Caspase recruitment domain family, member 14"/>
    <property type="match status" value="1"/>
</dbReference>
<dbReference type="FunFam" id="2.30.42.10:FF:000254">
    <property type="entry name" value="Caspase recruitment domain family, member 14"/>
    <property type="match status" value="1"/>
</dbReference>
<dbReference type="Gene3D" id="2.30.42.10">
    <property type="match status" value="1"/>
</dbReference>
<dbReference type="Gene3D" id="1.10.533.10">
    <property type="entry name" value="Death Domain, Fas"/>
    <property type="match status" value="1"/>
</dbReference>
<dbReference type="Gene3D" id="3.40.50.300">
    <property type="entry name" value="P-loop containing nucleotide triphosphate hydrolases"/>
    <property type="match status" value="1"/>
</dbReference>
<dbReference type="Gene3D" id="2.30.30.40">
    <property type="entry name" value="SH3 Domains"/>
    <property type="match status" value="1"/>
</dbReference>
<dbReference type="InterPro" id="IPR001315">
    <property type="entry name" value="CARD"/>
</dbReference>
<dbReference type="InterPro" id="IPR011029">
    <property type="entry name" value="DEATH-like_dom_sf"/>
</dbReference>
<dbReference type="InterPro" id="IPR008144">
    <property type="entry name" value="Guanylate_kin-like_dom"/>
</dbReference>
<dbReference type="InterPro" id="IPR027417">
    <property type="entry name" value="P-loop_NTPase"/>
</dbReference>
<dbReference type="InterPro" id="IPR001478">
    <property type="entry name" value="PDZ"/>
</dbReference>
<dbReference type="InterPro" id="IPR036034">
    <property type="entry name" value="PDZ_sf"/>
</dbReference>
<dbReference type="PANTHER" id="PTHR14559">
    <property type="entry name" value="CASPASE RECRUITMENT DOMAIN FAMILY"/>
    <property type="match status" value="1"/>
</dbReference>
<dbReference type="PANTHER" id="PTHR14559:SF1">
    <property type="entry name" value="CASPASE RECRUITMENT DOMAIN-CONTAINING PROTEIN 14"/>
    <property type="match status" value="1"/>
</dbReference>
<dbReference type="Pfam" id="PF00619">
    <property type="entry name" value="CARD"/>
    <property type="match status" value="1"/>
</dbReference>
<dbReference type="SMART" id="SM00228">
    <property type="entry name" value="PDZ"/>
    <property type="match status" value="1"/>
</dbReference>
<dbReference type="SUPFAM" id="SSF47986">
    <property type="entry name" value="DEATH domain"/>
    <property type="match status" value="1"/>
</dbReference>
<dbReference type="SUPFAM" id="SSF52540">
    <property type="entry name" value="P-loop containing nucleoside triphosphate hydrolases"/>
    <property type="match status" value="1"/>
</dbReference>
<dbReference type="SUPFAM" id="SSF50156">
    <property type="entry name" value="PDZ domain-like"/>
    <property type="match status" value="1"/>
</dbReference>
<dbReference type="PROSITE" id="PS50209">
    <property type="entry name" value="CARD"/>
    <property type="match status" value="1"/>
</dbReference>
<dbReference type="PROSITE" id="PS50052">
    <property type="entry name" value="GUANYLATE_KINASE_2"/>
    <property type="match status" value="1"/>
</dbReference>
<dbReference type="PROSITE" id="PS50106">
    <property type="entry name" value="PDZ"/>
    <property type="match status" value="1"/>
</dbReference>
<feature type="chain" id="PRO_0000144089" description="Caspase recruitment domain-containing protein 14">
    <location>
        <begin position="1"/>
        <end position="999"/>
    </location>
</feature>
<feature type="domain" description="CARD" evidence="3">
    <location>
        <begin position="15"/>
        <end position="107"/>
    </location>
</feature>
<feature type="domain" description="PDZ" evidence="5">
    <location>
        <begin position="572"/>
        <end position="655"/>
    </location>
</feature>
<feature type="domain" description="Guanylate kinase-like" evidence="4">
    <location>
        <begin position="803"/>
        <end position="986"/>
    </location>
</feature>
<feature type="region of interest" description="Maintains the protein in an inactive state" evidence="1">
    <location>
        <begin position="409"/>
        <end position="565"/>
    </location>
</feature>
<feature type="coiled-coil region" evidence="2">
    <location>
        <begin position="125"/>
        <end position="411"/>
    </location>
</feature>
<feature type="modified residue" description="Phosphoserine" evidence="1">
    <location>
        <position position="541"/>
    </location>
</feature>
<feature type="sequence conflict" description="In Ref. 2; AAH04692." evidence="6" ref="2">
    <original>QAQQQLLA</original>
    <variation>HLLEDHRS</variation>
    <location>
        <begin position="736"/>
        <end position="743"/>
    </location>
</feature>
<sequence>MAELCRMDSTLTALDEEMLWDMLESHRCRIVQSICPSRLTPYLRQAKVLGQLDEEEILHSSRFTNSAMRVGHLLDLLKARGKNGAIAFLESLKFHNPDVYTLVTGLQSDIDFSTFSGLMETSKLTECLAGAISSLQEELAQEKAQKEVLLRRCQQLKERLGLAEAHAEGLRQLEVDHSRMKREVSTHFHEVLKLKDEMLNLSLHYSNALREKELAATRCHSLQEELYLVKQELQRASLVSSCERESRERSLKMASNLEPQGEELNRLKEENEKLRSMTFSLVEKDILEQSLDEARESKQELVDRIHSLRERAVAAERQQKQYWEEKEQTLLQFRKTQVDCELYKEKMTMLQGQVAELQKERDQAYTARDRAQMEISQRLVEKDALRRRVFELTEQVCELRTQLRRLQAEAPGGPKQEAGARELCLRGKQRLVRMHAVCPPDDSDCSLLSSTESRLWWDLNSTSSREQMDSFRSSSPMPPSQQSLYKRVAEDFLEDPESLSFPEVLEMRLQGATVDDTDTDLEFEMIDGADLSQTEDSLQGSSRSLNVSESSVPVRRRPARKILSQVTVLAFQGDALLEQIGVIGGNLTGIFIHRVTPGSAADEMALRPGTQIMMVDYKPTKPSLRATLENTTLEQAVGLLRRVNGSCYLSVKINTEGYKNLIQDLDAKVVTSGDSFYIRVNLAMQRGGDGELQTHCNDILHVTDTMFQGRSCWHAHHVNPYTMKDMEPGTIPNYSQAQQQLLALIQDMTQRCTVPRKPPGGPQKLVRIVSVDKAAVSPLTSSFDQSQWDSGKEEGGPSVCFWSESCFTLAPYTLVHPHRPARPRPVLFVPRLVGRILGKKLCLLQGFKQCSAEYLSQEEYATWSQRGDIIQEGESIGDHHWITRHAVESLMNMSTHALLDVRLDSVRVLHRMDMFPIIIHVSVNEKTAKKLRKGLHRLGSSEEQFLEVARQEEGELDRVPCLYSSLAPDSWSDLDSLLSCVRLAIADEQKKVVWTESPC</sequence>
<protein>
    <recommendedName>
        <fullName>Caspase recruitment domain-containing protein 14</fullName>
    </recommendedName>
    <alternativeName>
        <fullName>Bcl10-interacting MAGUK protein 2</fullName>
        <shortName>Bimp2</shortName>
    </alternativeName>
</protein>
<name>CAR14_MOUSE</name>
<organism>
    <name type="scientific">Mus musculus</name>
    <name type="common">Mouse</name>
    <dbReference type="NCBI Taxonomy" id="10090"/>
    <lineage>
        <taxon>Eukaryota</taxon>
        <taxon>Metazoa</taxon>
        <taxon>Chordata</taxon>
        <taxon>Craniata</taxon>
        <taxon>Vertebrata</taxon>
        <taxon>Euteleostomi</taxon>
        <taxon>Mammalia</taxon>
        <taxon>Eutheria</taxon>
        <taxon>Euarchontoglires</taxon>
        <taxon>Glires</taxon>
        <taxon>Rodentia</taxon>
        <taxon>Myomorpha</taxon>
        <taxon>Muroidea</taxon>
        <taxon>Muridae</taxon>
        <taxon>Murinae</taxon>
        <taxon>Mus</taxon>
        <taxon>Mus</taxon>
    </lineage>
</organism>
<comment type="function">
    <text evidence="1">Acts as a scaffolding protein that can activate the inflammatory transcription factor NF-kappa-B and p38/JNK MAP kinase signaling pathways. Forms a signaling complex with BCL10 and MALT1, and activates MALT1 proteolytic activity and inflammatory gene expression. MALT1 is indispensable for CARD14-induced activation of NF-kappa-B and p38/JNK MAP kinases. May play a role in signaling mediated by TRAF2, TRAF3 and TRAF6 and protects cells against apoptosis.</text>
</comment>
<comment type="subunit">
    <text evidence="1">Interacts (via CARD domain) with BCL10 (via CARD domain). Forms a complex with MALT1 and BCL10; resulting in the formation of a CBM (CARD14-BLC10-MALT1) complex. Interacts with TRAF2, TRAF3 and TRAF6.</text>
</comment>
<comment type="subcellular location">
    <subcellularLocation>
        <location evidence="1">Cytoplasm</location>
    </subcellularLocation>
</comment>
<comment type="domain">
    <text evidence="1">A linker region between the coiled-coil and PDZ region holds the protein in an inactive state.</text>
</comment>
<comment type="caution">
    <text evidence="6">Supposed to contain a SH3 domain which is not detected by PROSITE, Pfam or SMART.</text>
</comment>
<proteinExistence type="evidence at transcript level"/>
<reference key="1">
    <citation type="journal article" date="2001" name="J. Biol. Chem.">
        <title>Bimp1, a MAGUK family member linking protein kinase C activation to Bcl10-mediated NF-kappa B induction.</title>
        <authorList>
            <person name="McAllister-Lucas L.M."/>
            <person name="Inohara N."/>
            <person name="Lucas P.C."/>
            <person name="Ruland J."/>
            <person name="Benito A."/>
            <person name="Li Q."/>
            <person name="Chen S."/>
            <person name="Chen F.F."/>
            <person name="Yamaoka S."/>
            <person name="Verma I.M."/>
            <person name="Mak T.W."/>
            <person name="Nunez G."/>
        </authorList>
    </citation>
    <scope>NUCLEOTIDE SEQUENCE [MRNA]</scope>
</reference>
<reference key="2">
    <citation type="journal article" date="2004" name="Genome Res.">
        <title>The status, quality, and expansion of the NIH full-length cDNA project: the Mammalian Gene Collection (MGC).</title>
        <authorList>
            <consortium name="The MGC Project Team"/>
        </authorList>
    </citation>
    <scope>NUCLEOTIDE SEQUENCE [LARGE SCALE MRNA]</scope>
    <source>
        <strain>FVB/N</strain>
        <tissue>Mammary gland</tissue>
    </source>
</reference>
<evidence type="ECO:0000250" key="1">
    <source>
        <dbReference type="UniProtKB" id="Q9BXL6"/>
    </source>
</evidence>
<evidence type="ECO:0000255" key="2"/>
<evidence type="ECO:0000255" key="3">
    <source>
        <dbReference type="PROSITE-ProRule" id="PRU00046"/>
    </source>
</evidence>
<evidence type="ECO:0000255" key="4">
    <source>
        <dbReference type="PROSITE-ProRule" id="PRU00100"/>
    </source>
</evidence>
<evidence type="ECO:0000255" key="5">
    <source>
        <dbReference type="PROSITE-ProRule" id="PRU00143"/>
    </source>
</evidence>
<evidence type="ECO:0000305" key="6"/>
<gene>
    <name type="primary">Card14</name>
    <name type="synonym">Bimp2</name>
</gene>